<proteinExistence type="inferred from homology"/>
<reference key="1">
    <citation type="submission" date="2005-08" db="EMBL/GenBank/DDBJ databases">
        <title>Complete sequence of chromosome 1 of Nitrosospira multiformis ATCC 25196.</title>
        <authorList>
            <person name="Copeland A."/>
            <person name="Lucas S."/>
            <person name="Lapidus A."/>
            <person name="Barry K."/>
            <person name="Detter J.C."/>
            <person name="Glavina T."/>
            <person name="Hammon N."/>
            <person name="Israni S."/>
            <person name="Pitluck S."/>
            <person name="Chain P."/>
            <person name="Malfatti S."/>
            <person name="Shin M."/>
            <person name="Vergez L."/>
            <person name="Schmutz J."/>
            <person name="Larimer F."/>
            <person name="Land M."/>
            <person name="Hauser L."/>
            <person name="Kyrpides N."/>
            <person name="Lykidis A."/>
            <person name="Richardson P."/>
        </authorList>
    </citation>
    <scope>NUCLEOTIDE SEQUENCE [LARGE SCALE GENOMIC DNA]</scope>
    <source>
        <strain>ATCC 25196 / NCIMB 11849 / C 71</strain>
    </source>
</reference>
<gene>
    <name evidence="1" type="primary">ihfB</name>
    <name evidence="1" type="synonym">himD</name>
    <name type="ordered locus">Nmul_A2068</name>
</gene>
<feature type="chain" id="PRO_1000060622" description="Integration host factor subunit beta">
    <location>
        <begin position="1"/>
        <end position="94"/>
    </location>
</feature>
<accession>Q2Y7A9</accession>
<name>IHFB_NITMU</name>
<dbReference type="EMBL" id="CP000103">
    <property type="protein sequence ID" value="ABB75362.1"/>
    <property type="molecule type" value="Genomic_DNA"/>
</dbReference>
<dbReference type="RefSeq" id="WP_011381373.1">
    <property type="nucleotide sequence ID" value="NC_007614.1"/>
</dbReference>
<dbReference type="SMR" id="Q2Y7A9"/>
<dbReference type="STRING" id="323848.Nmul_A2068"/>
<dbReference type="KEGG" id="nmu:Nmul_A2068"/>
<dbReference type="eggNOG" id="COG0776">
    <property type="taxonomic scope" value="Bacteria"/>
</dbReference>
<dbReference type="HOGENOM" id="CLU_105066_2_0_4"/>
<dbReference type="OrthoDB" id="9804203at2"/>
<dbReference type="Proteomes" id="UP000002718">
    <property type="component" value="Chromosome"/>
</dbReference>
<dbReference type="GO" id="GO:0005694">
    <property type="term" value="C:chromosome"/>
    <property type="evidence" value="ECO:0007669"/>
    <property type="project" value="InterPro"/>
</dbReference>
<dbReference type="GO" id="GO:0005829">
    <property type="term" value="C:cytosol"/>
    <property type="evidence" value="ECO:0007669"/>
    <property type="project" value="TreeGrafter"/>
</dbReference>
<dbReference type="GO" id="GO:0003677">
    <property type="term" value="F:DNA binding"/>
    <property type="evidence" value="ECO:0007669"/>
    <property type="project" value="UniProtKB-UniRule"/>
</dbReference>
<dbReference type="GO" id="GO:0030527">
    <property type="term" value="F:structural constituent of chromatin"/>
    <property type="evidence" value="ECO:0007669"/>
    <property type="project" value="InterPro"/>
</dbReference>
<dbReference type="GO" id="GO:0006310">
    <property type="term" value="P:DNA recombination"/>
    <property type="evidence" value="ECO:0007669"/>
    <property type="project" value="UniProtKB-UniRule"/>
</dbReference>
<dbReference type="GO" id="GO:0006355">
    <property type="term" value="P:regulation of DNA-templated transcription"/>
    <property type="evidence" value="ECO:0007669"/>
    <property type="project" value="UniProtKB-UniRule"/>
</dbReference>
<dbReference type="GO" id="GO:0006417">
    <property type="term" value="P:regulation of translation"/>
    <property type="evidence" value="ECO:0007669"/>
    <property type="project" value="UniProtKB-UniRule"/>
</dbReference>
<dbReference type="CDD" id="cd13836">
    <property type="entry name" value="IHF_B"/>
    <property type="match status" value="1"/>
</dbReference>
<dbReference type="FunFam" id="4.10.520.10:FF:000003">
    <property type="entry name" value="Integration host factor subunit beta"/>
    <property type="match status" value="1"/>
</dbReference>
<dbReference type="Gene3D" id="4.10.520.10">
    <property type="entry name" value="IHF-like DNA-binding proteins"/>
    <property type="match status" value="1"/>
</dbReference>
<dbReference type="HAMAP" id="MF_00381">
    <property type="entry name" value="IHF_beta"/>
    <property type="match status" value="1"/>
</dbReference>
<dbReference type="InterPro" id="IPR000119">
    <property type="entry name" value="Hist_DNA-bd"/>
</dbReference>
<dbReference type="InterPro" id="IPR010992">
    <property type="entry name" value="IHF-like_DNA-bd_dom_sf"/>
</dbReference>
<dbReference type="InterPro" id="IPR005685">
    <property type="entry name" value="IHF_beta"/>
</dbReference>
<dbReference type="NCBIfam" id="TIGR00988">
    <property type="entry name" value="hip"/>
    <property type="match status" value="1"/>
</dbReference>
<dbReference type="NCBIfam" id="NF001222">
    <property type="entry name" value="PRK00199.1"/>
    <property type="match status" value="1"/>
</dbReference>
<dbReference type="PANTHER" id="PTHR33175">
    <property type="entry name" value="DNA-BINDING PROTEIN HU"/>
    <property type="match status" value="1"/>
</dbReference>
<dbReference type="PANTHER" id="PTHR33175:SF5">
    <property type="entry name" value="INTEGRATION HOST FACTOR SUBUNIT BETA"/>
    <property type="match status" value="1"/>
</dbReference>
<dbReference type="Pfam" id="PF00216">
    <property type="entry name" value="Bac_DNA_binding"/>
    <property type="match status" value="1"/>
</dbReference>
<dbReference type="PRINTS" id="PR01727">
    <property type="entry name" value="DNABINDINGHU"/>
</dbReference>
<dbReference type="SMART" id="SM00411">
    <property type="entry name" value="BHL"/>
    <property type="match status" value="1"/>
</dbReference>
<dbReference type="SUPFAM" id="SSF47729">
    <property type="entry name" value="IHF-like DNA-binding proteins"/>
    <property type="match status" value="1"/>
</dbReference>
<protein>
    <recommendedName>
        <fullName evidence="1">Integration host factor subunit beta</fullName>
        <shortName evidence="1">IHF-beta</shortName>
    </recommendedName>
</protein>
<keyword id="KW-0233">DNA recombination</keyword>
<keyword id="KW-0238">DNA-binding</keyword>
<keyword id="KW-1185">Reference proteome</keyword>
<keyword id="KW-0804">Transcription</keyword>
<keyword id="KW-0805">Transcription regulation</keyword>
<keyword id="KW-0810">Translation regulation</keyword>
<comment type="function">
    <text evidence="1">This protein is one of the two subunits of integration host factor, a specific DNA-binding protein that functions in genetic recombination as well as in transcriptional and translational control.</text>
</comment>
<comment type="subunit">
    <text evidence="1">Heterodimer of an alpha and a beta chain.</text>
</comment>
<comment type="similarity">
    <text evidence="1">Belongs to the bacterial histone-like protein family.</text>
</comment>
<organism>
    <name type="scientific">Nitrosospira multiformis (strain ATCC 25196 / NCIMB 11849 / C 71)</name>
    <dbReference type="NCBI Taxonomy" id="323848"/>
    <lineage>
        <taxon>Bacteria</taxon>
        <taxon>Pseudomonadati</taxon>
        <taxon>Pseudomonadota</taxon>
        <taxon>Betaproteobacteria</taxon>
        <taxon>Nitrosomonadales</taxon>
        <taxon>Nitrosomonadaceae</taxon>
        <taxon>Nitrosospira</taxon>
    </lineage>
</organism>
<sequence>MTKSELIARLAARHPQLGTKDAELAVKVILDAMAKSLSQGQRIEIRGFGSFDLNYRPPRVGRNPKSGEKVRVPEKYVPHFKAGKEMRERVDQKN</sequence>
<evidence type="ECO:0000255" key="1">
    <source>
        <dbReference type="HAMAP-Rule" id="MF_00381"/>
    </source>
</evidence>